<comment type="function">
    <text evidence="4">May provide the missing metabolic reaction required to link the mitochondria and the cytoplasm in the mammalian model of one-carbon folate metabolism complementing thus the enzymatic activities of MTHFD2.</text>
</comment>
<comment type="catalytic activity">
    <reaction evidence="6">
        <text>(6S)-5,6,7,8-tetrahydrofolate + formate + ATP = (6R)-10-formyltetrahydrofolate + ADP + phosphate</text>
        <dbReference type="Rhea" id="RHEA:20221"/>
        <dbReference type="ChEBI" id="CHEBI:15740"/>
        <dbReference type="ChEBI" id="CHEBI:30616"/>
        <dbReference type="ChEBI" id="CHEBI:43474"/>
        <dbReference type="ChEBI" id="CHEBI:57453"/>
        <dbReference type="ChEBI" id="CHEBI:195366"/>
        <dbReference type="ChEBI" id="CHEBI:456216"/>
        <dbReference type="EC" id="6.3.4.3"/>
    </reaction>
    <physiologicalReaction direction="left-to-right" evidence="6">
        <dbReference type="Rhea" id="RHEA:20222"/>
    </physiologicalReaction>
</comment>
<comment type="pathway">
    <text evidence="6">One-carbon metabolism; tetrahydrofolate interconversion.</text>
</comment>
<comment type="subunit">
    <text evidence="2">Homodimer.</text>
</comment>
<comment type="subcellular location">
    <subcellularLocation>
        <location evidence="6">Mitochondrion</location>
    </subcellularLocation>
</comment>
<comment type="domain">
    <text>This monofunctional enzyme consists of two major domains: an N-terminal inactive methylene-THF dehydrogenase and cyclohydrolase domain and an active larger formyl-THF synthetase C-terminal domain.</text>
</comment>
<comment type="similarity">
    <text evidence="5">In the N-terminal section; belongs to the tetrahydrofolate dehydrogenase/cyclohydrolase family.</text>
</comment>
<comment type="similarity">
    <text evidence="5">In the C-terminal section; belongs to the formate--tetrahydrofolate ligase family.</text>
</comment>
<comment type="sequence caution" evidence="5">
    <conflict type="erroneous initiation">
        <sequence resource="EMBL-CDS" id="AAH30437"/>
    </conflict>
</comment>
<organism>
    <name type="scientific">Mus musculus</name>
    <name type="common">Mouse</name>
    <dbReference type="NCBI Taxonomy" id="10090"/>
    <lineage>
        <taxon>Eukaryota</taxon>
        <taxon>Metazoa</taxon>
        <taxon>Chordata</taxon>
        <taxon>Craniata</taxon>
        <taxon>Vertebrata</taxon>
        <taxon>Euteleostomi</taxon>
        <taxon>Mammalia</taxon>
        <taxon>Eutheria</taxon>
        <taxon>Euarchontoglires</taxon>
        <taxon>Glires</taxon>
        <taxon>Rodentia</taxon>
        <taxon>Myomorpha</taxon>
        <taxon>Muroidea</taxon>
        <taxon>Muridae</taxon>
        <taxon>Murinae</taxon>
        <taxon>Mus</taxon>
        <taxon>Mus</taxon>
    </lineage>
</organism>
<sequence length="977" mass="105729">MSVRLPLLLRQLGRQQLPSGPACRLRELCRSGSRSSSSGGGDPEGLRGRRLQDGQTFSSHGPGNPEAPGMDSIVRDVIHNSKEVLSLLQEKNPAFKPVLVVIQAGDDNLMKDMNQNLAKEAGLDITHICLPPDSGEDEIIDEILKINEDPRVHGLTLQISEDSLSNKVLNALKPEKDVDGVTDINLGKLVRGDAPECFVSPLAKAAVELVEKSGITLDGKKVLVVGAHGPLEAALQWLFQRKGSMTMSCPWATPQLPDKLREADIVVLGSPKPEEIPAVWIPSGTTILNCFHDFLSGKLSGGSPGVPVDKLIAEESVSLLAAALRIQNMVSSGRRWLREQQHRRWRLHCLKLQPLSPVPSDIEISRGQTPKAVDVLAKEIGLLADEIEIYGKSKAKVQLSLLERLKDQTDGKYVLVAGITPTPLGEGKSTVTIGLVQALTAHLKVNSFACLRQPSQGPTFGVKGGAAGGGYAQVIPMEEFNLHLTGDIHAITAANNLLAAAIDTRILHESTQTDKALYNRLVPLVNGVREFSEIQLSRLKKLGIHKTDPSTLTEEEVRKFARLNIDPATITWQRVLDTNDRFLRKITIGQGSTEKGYSRQAQFDIAVASEIMAVLALTDSLTDMKERLGRMVVASDKDGQPVTAEDLGVTGALTVLMKDAIKPNLMQTLEGTPVFVHAGPFANIAHGNSSVLADKIALKLVGEEGFVVTEAGFGADIGMEKFFNIKCRASGLVPNVVVLVATVRALKMHGGGPSVTAGVPLKKEYTEENIQLVADGCCNLQKQIQIAQLFGVPVVVALNVFKTDTRAEIDLVCELAKRAGAFDAVPCYHWSAGGKGSVDLARAVREAANKRSRFQFLYDVQLPIVEKIRVIAQTVYGAKDIELSPEAQSKIDRYTQQGFGNLPICMAKTHLSLSHEPDKKGVPRDFTLPISDVRASIGAGFIYPLVGTMSTMPGLPTRPCFYDIDLDTETEQVKGLF</sequence>
<gene>
    <name type="primary">Mthfd1l</name>
    <name type="synonym">Fthfsdc1</name>
</gene>
<proteinExistence type="evidence at protein level"/>
<name>C1TM_MOUSE</name>
<feature type="transit peptide" description="Mitochondrion" evidence="2">
    <location>
        <begin position="1"/>
        <end position="31"/>
    </location>
</feature>
<feature type="chain" id="PRO_0000343178" description="Monofunctional C1-tetrahydrofolate synthase, mitochondrial">
    <location>
        <begin position="32"/>
        <end position="977"/>
    </location>
</feature>
<feature type="region of interest" description="Disordered" evidence="3">
    <location>
        <begin position="29"/>
        <end position="71"/>
    </location>
</feature>
<feature type="region of interest" description="Methylenetetrahydrofolate dehydrogenase and cyclohydrolase">
    <location>
        <begin position="32"/>
        <end position="347"/>
    </location>
</feature>
<feature type="region of interest" description="Formyltetrahydrofolate synthetase">
    <location>
        <begin position="348"/>
        <end position="977"/>
    </location>
</feature>
<feature type="binding site" evidence="1">
    <location>
        <begin position="422"/>
        <end position="429"/>
    </location>
    <ligand>
        <name>ATP</name>
        <dbReference type="ChEBI" id="CHEBI:30616"/>
    </ligand>
</feature>
<feature type="modified residue" description="N6-acetyllysine; alternate" evidence="2">
    <location>
        <position position="188"/>
    </location>
</feature>
<feature type="modified residue" description="N6-succinyllysine; alternate" evidence="7">
    <location>
        <position position="188"/>
    </location>
</feature>
<feature type="modified residue" description="Phosphoserine" evidence="2">
    <location>
        <position position="356"/>
    </location>
</feature>
<feature type="modified residue" description="N6-succinyllysine" evidence="7">
    <location>
        <position position="595"/>
    </location>
</feature>
<feature type="sequence conflict" description="In Ref. 1; BAE35568." evidence="5" ref="1">
    <original>D</original>
    <variation>N</variation>
    <location>
        <position position="137"/>
    </location>
</feature>
<feature type="sequence conflict" description="In Ref. 1; BAE35568 and 2; AAH30437/AAH49936." evidence="5" ref="1 2">
    <original>V</original>
    <variation>A</variation>
    <location>
        <position position="279"/>
    </location>
</feature>
<feature type="sequence conflict" description="In Ref. 1; BAE35568." evidence="5" ref="1">
    <original>Q</original>
    <variation>H</variation>
    <location>
        <position position="353"/>
    </location>
</feature>
<feature type="sequence conflict" description="In Ref. 1; BAE20500." evidence="5" ref="1">
    <original>T</original>
    <variation>N</variation>
    <location>
        <position position="369"/>
    </location>
</feature>
<feature type="sequence conflict" description="In Ref. 1; BAC30053." evidence="5" ref="1">
    <original>I</original>
    <variation>V</variation>
    <location>
        <position position="419"/>
    </location>
</feature>
<feature type="sequence conflict" description="In Ref. 1; BAE35568." evidence="5" ref="1">
    <original>T</original>
    <variation>S</variation>
    <location>
        <position position="422"/>
    </location>
</feature>
<feature type="sequence conflict" description="In Ref. 1; BAE35568." evidence="5" ref="1">
    <original>V</original>
    <variation>A</variation>
    <location>
        <position position="632"/>
    </location>
</feature>
<feature type="sequence conflict" description="In Ref. 1; BAE20438." evidence="5" ref="1">
    <original>D</original>
    <variation>G</variation>
    <location>
        <position position="963"/>
    </location>
</feature>
<feature type="helix" evidence="8">
    <location>
        <begin position="514"/>
        <end position="521"/>
    </location>
</feature>
<feature type="strand" evidence="8">
    <location>
        <begin position="525"/>
        <end position="528"/>
    </location>
</feature>
<feature type="helix" evidence="8">
    <location>
        <begin position="533"/>
        <end position="542"/>
    </location>
</feature>
<feature type="turn" evidence="8">
    <location>
        <begin position="549"/>
        <end position="551"/>
    </location>
</feature>
<feature type="helix" evidence="8">
    <location>
        <begin position="554"/>
        <end position="562"/>
    </location>
</feature>
<evidence type="ECO:0000250" key="1"/>
<evidence type="ECO:0000250" key="2">
    <source>
        <dbReference type="UniProtKB" id="Q6UB35"/>
    </source>
</evidence>
<evidence type="ECO:0000256" key="3">
    <source>
        <dbReference type="SAM" id="MobiDB-lite"/>
    </source>
</evidence>
<evidence type="ECO:0000269" key="4">
    <source>
    </source>
</evidence>
<evidence type="ECO:0000305" key="5"/>
<evidence type="ECO:0000305" key="6">
    <source>
    </source>
</evidence>
<evidence type="ECO:0007744" key="7">
    <source>
    </source>
</evidence>
<evidence type="ECO:0007829" key="8">
    <source>
        <dbReference type="PDB" id="2EO2"/>
    </source>
</evidence>
<reference key="1">
    <citation type="journal article" date="2005" name="Science">
        <title>The transcriptional landscape of the mammalian genome.</title>
        <authorList>
            <person name="Carninci P."/>
            <person name="Kasukawa T."/>
            <person name="Katayama S."/>
            <person name="Gough J."/>
            <person name="Frith M.C."/>
            <person name="Maeda N."/>
            <person name="Oyama R."/>
            <person name="Ravasi T."/>
            <person name="Lenhard B."/>
            <person name="Wells C."/>
            <person name="Kodzius R."/>
            <person name="Shimokawa K."/>
            <person name="Bajic V.B."/>
            <person name="Brenner S.E."/>
            <person name="Batalov S."/>
            <person name="Forrest A.R."/>
            <person name="Zavolan M."/>
            <person name="Davis M.J."/>
            <person name="Wilming L.G."/>
            <person name="Aidinis V."/>
            <person name="Allen J.E."/>
            <person name="Ambesi-Impiombato A."/>
            <person name="Apweiler R."/>
            <person name="Aturaliya R.N."/>
            <person name="Bailey T.L."/>
            <person name="Bansal M."/>
            <person name="Baxter L."/>
            <person name="Beisel K.W."/>
            <person name="Bersano T."/>
            <person name="Bono H."/>
            <person name="Chalk A.M."/>
            <person name="Chiu K.P."/>
            <person name="Choudhary V."/>
            <person name="Christoffels A."/>
            <person name="Clutterbuck D.R."/>
            <person name="Crowe M.L."/>
            <person name="Dalla E."/>
            <person name="Dalrymple B.P."/>
            <person name="de Bono B."/>
            <person name="Della Gatta G."/>
            <person name="di Bernardo D."/>
            <person name="Down T."/>
            <person name="Engstrom P."/>
            <person name="Fagiolini M."/>
            <person name="Faulkner G."/>
            <person name="Fletcher C.F."/>
            <person name="Fukushima T."/>
            <person name="Furuno M."/>
            <person name="Futaki S."/>
            <person name="Gariboldi M."/>
            <person name="Georgii-Hemming P."/>
            <person name="Gingeras T.R."/>
            <person name="Gojobori T."/>
            <person name="Green R.E."/>
            <person name="Gustincich S."/>
            <person name="Harbers M."/>
            <person name="Hayashi Y."/>
            <person name="Hensch T.K."/>
            <person name="Hirokawa N."/>
            <person name="Hill D."/>
            <person name="Huminiecki L."/>
            <person name="Iacono M."/>
            <person name="Ikeo K."/>
            <person name="Iwama A."/>
            <person name="Ishikawa T."/>
            <person name="Jakt M."/>
            <person name="Kanapin A."/>
            <person name="Katoh M."/>
            <person name="Kawasawa Y."/>
            <person name="Kelso J."/>
            <person name="Kitamura H."/>
            <person name="Kitano H."/>
            <person name="Kollias G."/>
            <person name="Krishnan S.P."/>
            <person name="Kruger A."/>
            <person name="Kummerfeld S.K."/>
            <person name="Kurochkin I.V."/>
            <person name="Lareau L.F."/>
            <person name="Lazarevic D."/>
            <person name="Lipovich L."/>
            <person name="Liu J."/>
            <person name="Liuni S."/>
            <person name="McWilliam S."/>
            <person name="Madan Babu M."/>
            <person name="Madera M."/>
            <person name="Marchionni L."/>
            <person name="Matsuda H."/>
            <person name="Matsuzawa S."/>
            <person name="Miki H."/>
            <person name="Mignone F."/>
            <person name="Miyake S."/>
            <person name="Morris K."/>
            <person name="Mottagui-Tabar S."/>
            <person name="Mulder N."/>
            <person name="Nakano N."/>
            <person name="Nakauchi H."/>
            <person name="Ng P."/>
            <person name="Nilsson R."/>
            <person name="Nishiguchi S."/>
            <person name="Nishikawa S."/>
            <person name="Nori F."/>
            <person name="Ohara O."/>
            <person name="Okazaki Y."/>
            <person name="Orlando V."/>
            <person name="Pang K.C."/>
            <person name="Pavan W.J."/>
            <person name="Pavesi G."/>
            <person name="Pesole G."/>
            <person name="Petrovsky N."/>
            <person name="Piazza S."/>
            <person name="Reed J."/>
            <person name="Reid J.F."/>
            <person name="Ring B.Z."/>
            <person name="Ringwald M."/>
            <person name="Rost B."/>
            <person name="Ruan Y."/>
            <person name="Salzberg S.L."/>
            <person name="Sandelin A."/>
            <person name="Schneider C."/>
            <person name="Schoenbach C."/>
            <person name="Sekiguchi K."/>
            <person name="Semple C.A."/>
            <person name="Seno S."/>
            <person name="Sessa L."/>
            <person name="Sheng Y."/>
            <person name="Shibata Y."/>
            <person name="Shimada H."/>
            <person name="Shimada K."/>
            <person name="Silva D."/>
            <person name="Sinclair B."/>
            <person name="Sperling S."/>
            <person name="Stupka E."/>
            <person name="Sugiura K."/>
            <person name="Sultana R."/>
            <person name="Takenaka Y."/>
            <person name="Taki K."/>
            <person name="Tammoja K."/>
            <person name="Tan S.L."/>
            <person name="Tang S."/>
            <person name="Taylor M.S."/>
            <person name="Tegner J."/>
            <person name="Teichmann S.A."/>
            <person name="Ueda H.R."/>
            <person name="van Nimwegen E."/>
            <person name="Verardo R."/>
            <person name="Wei C.L."/>
            <person name="Yagi K."/>
            <person name="Yamanishi H."/>
            <person name="Zabarovsky E."/>
            <person name="Zhu S."/>
            <person name="Zimmer A."/>
            <person name="Hide W."/>
            <person name="Bult C."/>
            <person name="Grimmond S.M."/>
            <person name="Teasdale R.D."/>
            <person name="Liu E.T."/>
            <person name="Brusic V."/>
            <person name="Quackenbush J."/>
            <person name="Wahlestedt C."/>
            <person name="Mattick J.S."/>
            <person name="Hume D.A."/>
            <person name="Kai C."/>
            <person name="Sasaki D."/>
            <person name="Tomaru Y."/>
            <person name="Fukuda S."/>
            <person name="Kanamori-Katayama M."/>
            <person name="Suzuki M."/>
            <person name="Aoki J."/>
            <person name="Arakawa T."/>
            <person name="Iida J."/>
            <person name="Imamura K."/>
            <person name="Itoh M."/>
            <person name="Kato T."/>
            <person name="Kawaji H."/>
            <person name="Kawagashira N."/>
            <person name="Kawashima T."/>
            <person name="Kojima M."/>
            <person name="Kondo S."/>
            <person name="Konno H."/>
            <person name="Nakano K."/>
            <person name="Ninomiya N."/>
            <person name="Nishio T."/>
            <person name="Okada M."/>
            <person name="Plessy C."/>
            <person name="Shibata K."/>
            <person name="Shiraki T."/>
            <person name="Suzuki S."/>
            <person name="Tagami M."/>
            <person name="Waki K."/>
            <person name="Watahiki A."/>
            <person name="Okamura-Oho Y."/>
            <person name="Suzuki H."/>
            <person name="Kawai J."/>
            <person name="Hayashizaki Y."/>
        </authorList>
    </citation>
    <scope>NUCLEOTIDE SEQUENCE [LARGE SCALE MRNA]</scope>
    <source>
        <strain>C57BL/6J</strain>
        <tissue>Cerebellum</tissue>
        <tissue>Hypothalamus</tissue>
    </source>
</reference>
<reference key="2">
    <citation type="journal article" date="2004" name="Genome Res.">
        <title>The status, quality, and expansion of the NIH full-length cDNA project: the Mammalian Gene Collection (MGC).</title>
        <authorList>
            <consortium name="The MGC Project Team"/>
        </authorList>
    </citation>
    <scope>NUCLEOTIDE SEQUENCE [LARGE SCALE MRNA] OF 167-977</scope>
    <source>
        <strain>FVB/N-3</strain>
        <tissue>Mammary tumor</tissue>
    </source>
</reference>
<reference key="3">
    <citation type="journal article" date="2005" name="J. Biol. Chem.">
        <title>Disruption of the mthfd1 gene reveals a monofunctional 10-formyltetrahydrofolate synthetase in mammalian mitochondria.</title>
        <authorList>
            <person name="Christensen K.E."/>
            <person name="Patel H."/>
            <person name="Kuzmanov U."/>
            <person name="Mejia N.R."/>
            <person name="MacKenzie R.E."/>
        </authorList>
    </citation>
    <scope>FUNCTION</scope>
    <scope>CATALYTIC ACTIVITY</scope>
    <scope>PATHWAY</scope>
    <scope>SUBCELLULAR LOCATION</scope>
</reference>
<reference key="4">
    <citation type="journal article" date="2010" name="Cell">
        <title>A tissue-specific atlas of mouse protein phosphorylation and expression.</title>
        <authorList>
            <person name="Huttlin E.L."/>
            <person name="Jedrychowski M.P."/>
            <person name="Elias J.E."/>
            <person name="Goswami T."/>
            <person name="Rad R."/>
            <person name="Beausoleil S.A."/>
            <person name="Villen J."/>
            <person name="Haas W."/>
            <person name="Sowa M.E."/>
            <person name="Gygi S.P."/>
        </authorList>
    </citation>
    <scope>IDENTIFICATION BY MASS SPECTROMETRY [LARGE SCALE ANALYSIS]</scope>
    <source>
        <tissue>Brain</tissue>
        <tissue>Brown adipose tissue</tissue>
        <tissue>Heart</tissue>
        <tissue>Kidney</tissue>
        <tissue>Liver</tissue>
        <tissue>Lung</tissue>
        <tissue>Pancreas</tissue>
        <tissue>Spleen</tissue>
        <tissue>Testis</tissue>
    </source>
</reference>
<reference key="5">
    <citation type="journal article" date="2013" name="Mol. Cell">
        <title>SIRT5-mediated lysine desuccinylation impacts diverse metabolic pathways.</title>
        <authorList>
            <person name="Park J."/>
            <person name="Chen Y."/>
            <person name="Tishkoff D.X."/>
            <person name="Peng C."/>
            <person name="Tan M."/>
            <person name="Dai L."/>
            <person name="Xie Z."/>
            <person name="Zhang Y."/>
            <person name="Zwaans B.M."/>
            <person name="Skinner M.E."/>
            <person name="Lombard D.B."/>
            <person name="Zhao Y."/>
        </authorList>
    </citation>
    <scope>SUCCINYLATION [LARGE SCALE ANALYSIS] AT LYS-188 AND LYS-595</scope>
    <scope>IDENTIFICATION BY MASS SPECTROMETRY [LARGE SCALE ANALYSIS]</scope>
    <source>
        <tissue>Embryonic fibroblast</tissue>
    </source>
</reference>
<reference key="6">
    <citation type="submission" date="2007-10" db="PDB data bank">
        <title>Solution structure of the insertion region (510-573) of FTHFS domain from mouse methylenetetrahydrofolate dehydrogenase (NADP+ dependent) 1-like protein.</title>
        <authorList>
            <consortium name="RIKEN structural genomics initiative (RSGI)"/>
        </authorList>
    </citation>
    <scope>STRUCTURE BY NMR OF 510-573</scope>
</reference>
<dbReference type="EC" id="6.3.4.3" evidence="6"/>
<dbReference type="EMBL" id="AK038579">
    <property type="protein sequence ID" value="BAC30053.1"/>
    <property type="molecule type" value="mRNA"/>
</dbReference>
<dbReference type="EMBL" id="AK028211">
    <property type="protein sequence ID" value="BAE20438.1"/>
    <property type="molecule type" value="mRNA"/>
</dbReference>
<dbReference type="EMBL" id="AK036284">
    <property type="protein sequence ID" value="BAE20500.1"/>
    <property type="molecule type" value="mRNA"/>
</dbReference>
<dbReference type="EMBL" id="AK160025">
    <property type="protein sequence ID" value="BAE35568.1"/>
    <property type="molecule type" value="mRNA"/>
</dbReference>
<dbReference type="EMBL" id="BC030437">
    <property type="protein sequence ID" value="AAH30437.1"/>
    <property type="status" value="ALT_INIT"/>
    <property type="molecule type" value="mRNA"/>
</dbReference>
<dbReference type="EMBL" id="BC049936">
    <property type="protein sequence ID" value="AAH49936.1"/>
    <property type="molecule type" value="mRNA"/>
</dbReference>
<dbReference type="CCDS" id="CCDS56672.1"/>
<dbReference type="RefSeq" id="NP_001164256.1">
    <property type="nucleotide sequence ID" value="NM_001170785.1"/>
</dbReference>
<dbReference type="RefSeq" id="NP_001164257.1">
    <property type="nucleotide sequence ID" value="NM_001170786.1"/>
</dbReference>
<dbReference type="RefSeq" id="NP_758512.3">
    <property type="nucleotide sequence ID" value="NM_172308.4"/>
</dbReference>
<dbReference type="PDB" id="2EO2">
    <property type="method" value="NMR"/>
    <property type="chains" value="A=510-573"/>
</dbReference>
<dbReference type="PDBsum" id="2EO2"/>
<dbReference type="SMR" id="Q3V3R1"/>
<dbReference type="BioGRID" id="234813">
    <property type="interactions" value="9"/>
</dbReference>
<dbReference type="FunCoup" id="Q3V3R1">
    <property type="interactions" value="1996"/>
</dbReference>
<dbReference type="IntAct" id="Q3V3R1">
    <property type="interactions" value="7"/>
</dbReference>
<dbReference type="MINT" id="Q3V3R1"/>
<dbReference type="STRING" id="10090.ENSMUSP00000112897"/>
<dbReference type="GlyGen" id="Q3V3R1">
    <property type="glycosylation" value="1 site"/>
</dbReference>
<dbReference type="iPTMnet" id="Q3V3R1"/>
<dbReference type="PhosphoSitePlus" id="Q3V3R1"/>
<dbReference type="SwissPalm" id="Q3V3R1"/>
<dbReference type="REPRODUCTION-2DPAGE" id="Q3V3R1"/>
<dbReference type="jPOST" id="Q3V3R1"/>
<dbReference type="PaxDb" id="10090-ENSMUSP00000112897"/>
<dbReference type="PeptideAtlas" id="Q3V3R1"/>
<dbReference type="ProteomicsDB" id="273808"/>
<dbReference type="Pumba" id="Q3V3R1"/>
<dbReference type="Antibodypedia" id="33330">
    <property type="antibodies" value="156 antibodies from 28 providers"/>
</dbReference>
<dbReference type="DNASU" id="270685"/>
<dbReference type="Ensembl" id="ENSMUST00000043735.8">
    <property type="protein sequence ID" value="ENSMUSP00000036178.8"/>
    <property type="gene ID" value="ENSMUSG00000040675.18"/>
</dbReference>
<dbReference type="Ensembl" id="ENSMUST00000117291.8">
    <property type="protein sequence ID" value="ENSMUSP00000112870.2"/>
    <property type="gene ID" value="ENSMUSG00000040675.18"/>
</dbReference>
<dbReference type="Ensembl" id="ENSMUST00000120585.8">
    <property type="protein sequence ID" value="ENSMUSP00000112897.2"/>
    <property type="gene ID" value="ENSMUSG00000040675.18"/>
</dbReference>
<dbReference type="GeneID" id="270685"/>
<dbReference type="KEGG" id="mmu:270685"/>
<dbReference type="UCSC" id="uc007ehj.2">
    <property type="organism name" value="mouse"/>
</dbReference>
<dbReference type="AGR" id="MGI:1924836"/>
<dbReference type="CTD" id="25902"/>
<dbReference type="MGI" id="MGI:1924836">
    <property type="gene designation" value="Mthfd1l"/>
</dbReference>
<dbReference type="VEuPathDB" id="HostDB:ENSMUSG00000040675"/>
<dbReference type="eggNOG" id="KOG4230">
    <property type="taxonomic scope" value="Eukaryota"/>
</dbReference>
<dbReference type="GeneTree" id="ENSGT00940000157477"/>
<dbReference type="HOGENOM" id="CLU_003601_0_0_1"/>
<dbReference type="InParanoid" id="Q3V3R1"/>
<dbReference type="OMA" id="KFWNLKC"/>
<dbReference type="OrthoDB" id="1845775at2759"/>
<dbReference type="PhylomeDB" id="Q3V3R1"/>
<dbReference type="TreeFam" id="TF300623"/>
<dbReference type="BRENDA" id="6.3.4.3">
    <property type="organism ID" value="3474"/>
</dbReference>
<dbReference type="Reactome" id="R-MMU-196757">
    <property type="pathway name" value="Metabolism of folate and pterines"/>
</dbReference>
<dbReference type="UniPathway" id="UPA00193"/>
<dbReference type="BioGRID-ORCS" id="270685">
    <property type="hits" value="10 hits in 80 CRISPR screens"/>
</dbReference>
<dbReference type="CD-CODE" id="CE726F99">
    <property type="entry name" value="Postsynaptic density"/>
</dbReference>
<dbReference type="ChiTaRS" id="Mthfd1l">
    <property type="organism name" value="mouse"/>
</dbReference>
<dbReference type="EvolutionaryTrace" id="Q3V3R1"/>
<dbReference type="PRO" id="PR:Q3V3R1"/>
<dbReference type="Proteomes" id="UP000000589">
    <property type="component" value="Chromosome 10"/>
</dbReference>
<dbReference type="RNAct" id="Q3V3R1">
    <property type="molecule type" value="protein"/>
</dbReference>
<dbReference type="Bgee" id="ENSMUSG00000040675">
    <property type="expression patterns" value="Expressed in epiblast (generic) and 233 other cell types or tissues"/>
</dbReference>
<dbReference type="GO" id="GO:0005759">
    <property type="term" value="C:mitochondrial matrix"/>
    <property type="evidence" value="ECO:0000315"/>
    <property type="project" value="MGI"/>
</dbReference>
<dbReference type="GO" id="GO:0005739">
    <property type="term" value="C:mitochondrion"/>
    <property type="evidence" value="ECO:0000314"/>
    <property type="project" value="BHF-UCL"/>
</dbReference>
<dbReference type="GO" id="GO:0005524">
    <property type="term" value="F:ATP binding"/>
    <property type="evidence" value="ECO:0007669"/>
    <property type="project" value="UniProtKB-KW"/>
</dbReference>
<dbReference type="GO" id="GO:0004329">
    <property type="term" value="F:formate-tetrahydrofolate ligase activity"/>
    <property type="evidence" value="ECO:0000315"/>
    <property type="project" value="MGI"/>
</dbReference>
<dbReference type="GO" id="GO:0004488">
    <property type="term" value="F:methylenetetrahydrofolate dehydrogenase (NADP+) activity"/>
    <property type="evidence" value="ECO:0007669"/>
    <property type="project" value="InterPro"/>
</dbReference>
<dbReference type="GO" id="GO:0042803">
    <property type="term" value="F:protein homodimerization activity"/>
    <property type="evidence" value="ECO:0007669"/>
    <property type="project" value="Ensembl"/>
</dbReference>
<dbReference type="GO" id="GO:0009257">
    <property type="term" value="P:10-formyltetrahydrofolate biosynthetic process"/>
    <property type="evidence" value="ECO:0000266"/>
    <property type="project" value="MGI"/>
</dbReference>
<dbReference type="GO" id="GO:0048702">
    <property type="term" value="P:embryonic neurocranium morphogenesis"/>
    <property type="evidence" value="ECO:0000315"/>
    <property type="project" value="BHF-UCL"/>
</dbReference>
<dbReference type="GO" id="GO:0048703">
    <property type="term" value="P:embryonic viscerocranium morphogenesis"/>
    <property type="evidence" value="ECO:0000315"/>
    <property type="project" value="BHF-UCL"/>
</dbReference>
<dbReference type="GO" id="GO:0015943">
    <property type="term" value="P:formate biosynthetic process"/>
    <property type="evidence" value="ECO:0000315"/>
    <property type="project" value="MGI"/>
</dbReference>
<dbReference type="GO" id="GO:0001843">
    <property type="term" value="P:neural tube closure"/>
    <property type="evidence" value="ECO:0000315"/>
    <property type="project" value="BHF-UCL"/>
</dbReference>
<dbReference type="GO" id="GO:0035999">
    <property type="term" value="P:tetrahydrofolate interconversion"/>
    <property type="evidence" value="ECO:0000315"/>
    <property type="project" value="MGI"/>
</dbReference>
<dbReference type="CDD" id="cd00477">
    <property type="entry name" value="FTHFS"/>
    <property type="match status" value="1"/>
</dbReference>
<dbReference type="FunFam" id="1.10.8.770:FF:000001">
    <property type="entry name" value="Methylenetetrahydrofolate dehydrogenase (NADP+ dependent) 1 like"/>
    <property type="match status" value="1"/>
</dbReference>
<dbReference type="FunFam" id="3.40.50.10860:FF:000013">
    <property type="entry name" value="Methylenetetrahydrofolate dehydrogenase (NADP+ dependent) 1 like"/>
    <property type="match status" value="1"/>
</dbReference>
<dbReference type="FunFam" id="3.40.50.300:FF:000556">
    <property type="entry name" value="Methylenetetrahydrofolate dehydrogenase (NADP+ dependent) 1 like"/>
    <property type="match status" value="1"/>
</dbReference>
<dbReference type="FunFam" id="3.40.50.300:FF:000627">
    <property type="entry name" value="Methylenetetrahydrofolate dehydrogenase (NADP+ dependent) 1 like"/>
    <property type="match status" value="1"/>
</dbReference>
<dbReference type="FunFam" id="3.40.50.720:FF:000239">
    <property type="entry name" value="monofunctional C1-tetrahydrofolate synthase, mitochondrial isoform X1"/>
    <property type="match status" value="1"/>
</dbReference>
<dbReference type="FunFam" id="3.10.410.10:FF:000001">
    <property type="entry name" value="Putative formate--tetrahydrofolate ligase"/>
    <property type="match status" value="1"/>
</dbReference>
<dbReference type="Gene3D" id="1.10.8.770">
    <property type="match status" value="1"/>
</dbReference>
<dbReference type="Gene3D" id="3.10.410.10">
    <property type="entry name" value="Formyltetrahydrofolate synthetase, domain 3"/>
    <property type="match status" value="1"/>
</dbReference>
<dbReference type="Gene3D" id="3.40.50.10860">
    <property type="entry name" value="Leucine Dehydrogenase, chain A, domain 1"/>
    <property type="match status" value="1"/>
</dbReference>
<dbReference type="Gene3D" id="3.40.50.720">
    <property type="entry name" value="NAD(P)-binding Rossmann-like Domain"/>
    <property type="match status" value="1"/>
</dbReference>
<dbReference type="Gene3D" id="3.40.50.300">
    <property type="entry name" value="P-loop containing nucleotide triphosphate hydrolases"/>
    <property type="match status" value="2"/>
</dbReference>
<dbReference type="HAMAP" id="MF_01543">
    <property type="entry name" value="FTHFS"/>
    <property type="match status" value="1"/>
</dbReference>
<dbReference type="InterPro" id="IPR046346">
    <property type="entry name" value="Aminoacid_DH-like_N_sf"/>
</dbReference>
<dbReference type="InterPro" id="IPR000559">
    <property type="entry name" value="Formate_THF_ligase"/>
</dbReference>
<dbReference type="InterPro" id="IPR020628">
    <property type="entry name" value="Formate_THF_ligase_CS"/>
</dbReference>
<dbReference type="InterPro" id="IPR036291">
    <property type="entry name" value="NAD(P)-bd_dom_sf"/>
</dbReference>
<dbReference type="InterPro" id="IPR027417">
    <property type="entry name" value="P-loop_NTPase"/>
</dbReference>
<dbReference type="InterPro" id="IPR000672">
    <property type="entry name" value="THF_DH/CycHdrlase"/>
</dbReference>
<dbReference type="InterPro" id="IPR020630">
    <property type="entry name" value="THF_DH/CycHdrlase_cat_dom"/>
</dbReference>
<dbReference type="InterPro" id="IPR020631">
    <property type="entry name" value="THF_DH/CycHdrlase_NAD-bd_dom"/>
</dbReference>
<dbReference type="PANTHER" id="PTHR48099">
    <property type="entry name" value="C-1-TETRAHYDROFOLATE SYNTHASE, CYTOPLASMIC-RELATED"/>
    <property type="match status" value="1"/>
</dbReference>
<dbReference type="PANTHER" id="PTHR48099:SF12">
    <property type="entry name" value="MONOFUNCTIONAL C1-TETRAHYDROFOLATE SYNTHASE, MITOCHONDRIAL"/>
    <property type="match status" value="1"/>
</dbReference>
<dbReference type="Pfam" id="PF01268">
    <property type="entry name" value="FTHFS"/>
    <property type="match status" value="1"/>
</dbReference>
<dbReference type="Pfam" id="PF00763">
    <property type="entry name" value="THF_DHG_CYH"/>
    <property type="match status" value="1"/>
</dbReference>
<dbReference type="Pfam" id="PF02882">
    <property type="entry name" value="THF_DHG_CYH_C"/>
    <property type="match status" value="1"/>
</dbReference>
<dbReference type="PRINTS" id="PR00085">
    <property type="entry name" value="THFDHDRGNASE"/>
</dbReference>
<dbReference type="SUPFAM" id="SSF53223">
    <property type="entry name" value="Aminoacid dehydrogenase-like, N-terminal domain"/>
    <property type="match status" value="1"/>
</dbReference>
<dbReference type="SUPFAM" id="SSF51735">
    <property type="entry name" value="NAD(P)-binding Rossmann-fold domains"/>
    <property type="match status" value="1"/>
</dbReference>
<dbReference type="SUPFAM" id="SSF52540">
    <property type="entry name" value="P-loop containing nucleoside triphosphate hydrolases"/>
    <property type="match status" value="1"/>
</dbReference>
<dbReference type="PROSITE" id="PS00721">
    <property type="entry name" value="FTHFS_1"/>
    <property type="match status" value="1"/>
</dbReference>
<dbReference type="PROSITE" id="PS00722">
    <property type="entry name" value="FTHFS_2"/>
    <property type="match status" value="1"/>
</dbReference>
<accession>Q3V3R1</accession>
<accession>Q3TVQ0</accession>
<accession>Q3V402</accession>
<accession>Q80V98</accession>
<accession>Q8CAL0</accession>
<accession>Q8K2N5</accession>
<keyword id="KW-0002">3D-structure</keyword>
<keyword id="KW-0007">Acetylation</keyword>
<keyword id="KW-0067">ATP-binding</keyword>
<keyword id="KW-0436">Ligase</keyword>
<keyword id="KW-0496">Mitochondrion</keyword>
<keyword id="KW-0547">Nucleotide-binding</keyword>
<keyword id="KW-0554">One-carbon metabolism</keyword>
<keyword id="KW-0597">Phosphoprotein</keyword>
<keyword id="KW-1185">Reference proteome</keyword>
<keyword id="KW-0809">Transit peptide</keyword>
<protein>
    <recommendedName>
        <fullName evidence="6">Monofunctional C1-tetrahydrofolate synthase, mitochondrial</fullName>
        <ecNumber evidence="6">6.3.4.3</ecNumber>
    </recommendedName>
    <alternativeName>
        <fullName>Formyltetrahydrofolate synthetase</fullName>
    </alternativeName>
</protein>